<sequence length="343" mass="37461">MKALAKLERGPGLTLTRVKKPEVGHNDVLIKIRRTAICGTDIHIWKWDDWAQKTIPVPMHVGHEYVGEIVEMGQEVRGFSIGDRVSGEGHITCGFCRNCRAGRRHLCRNTVGVGVNREGAFAEYLAIPAFNAFKIPPEISDDLAAIFDPFGNATHTALSFNLVGEDVLITGAGPIGVMAVAIAKHVGARNVVITDINDYRLELARKMGATRAVNVSRESLRDVMADLHMTEGFDVGLEMSGVPSAFTSLLESMNHGGKVALLGIPPAQTAIDWNQVIFKGLEIKGIYGREMFETWYKMVAMLQSGLDLSPIITHRFAVDDYEKGFAAMLSGESGKVILDWADA</sequence>
<dbReference type="EC" id="1.1.1.103" evidence="1"/>
<dbReference type="EMBL" id="CP000571">
    <property type="protein sequence ID" value="ABN86720.1"/>
    <property type="molecule type" value="Genomic_DNA"/>
</dbReference>
<dbReference type="RefSeq" id="WP_004194543.1">
    <property type="nucleotide sequence ID" value="NC_009075.1"/>
</dbReference>
<dbReference type="SMR" id="A3NF91"/>
<dbReference type="GeneID" id="93062068"/>
<dbReference type="KEGG" id="bpd:BURPS668_A0006"/>
<dbReference type="HOGENOM" id="CLU_026673_11_0_4"/>
<dbReference type="UniPathway" id="UPA00046">
    <property type="reaction ID" value="UER00505"/>
</dbReference>
<dbReference type="GO" id="GO:0005737">
    <property type="term" value="C:cytoplasm"/>
    <property type="evidence" value="ECO:0007669"/>
    <property type="project" value="UniProtKB-SubCell"/>
</dbReference>
<dbReference type="GO" id="GO:0008743">
    <property type="term" value="F:L-threonine 3-dehydrogenase activity"/>
    <property type="evidence" value="ECO:0007669"/>
    <property type="project" value="UniProtKB-UniRule"/>
</dbReference>
<dbReference type="GO" id="GO:0008270">
    <property type="term" value="F:zinc ion binding"/>
    <property type="evidence" value="ECO:0007669"/>
    <property type="project" value="UniProtKB-UniRule"/>
</dbReference>
<dbReference type="GO" id="GO:0019518">
    <property type="term" value="P:L-threonine catabolic process to glycine"/>
    <property type="evidence" value="ECO:0007669"/>
    <property type="project" value="UniProtKB-UniPathway"/>
</dbReference>
<dbReference type="Gene3D" id="3.90.180.10">
    <property type="entry name" value="Medium-chain alcohol dehydrogenases, catalytic domain"/>
    <property type="match status" value="1"/>
</dbReference>
<dbReference type="Gene3D" id="3.40.50.720">
    <property type="entry name" value="NAD(P)-binding Rossmann-like Domain"/>
    <property type="match status" value="1"/>
</dbReference>
<dbReference type="HAMAP" id="MF_00627">
    <property type="entry name" value="Thr_dehydrog"/>
    <property type="match status" value="1"/>
</dbReference>
<dbReference type="InterPro" id="IPR013149">
    <property type="entry name" value="ADH-like_C"/>
</dbReference>
<dbReference type="InterPro" id="IPR013154">
    <property type="entry name" value="ADH-like_N"/>
</dbReference>
<dbReference type="InterPro" id="IPR002328">
    <property type="entry name" value="ADH_Zn_CS"/>
</dbReference>
<dbReference type="InterPro" id="IPR011032">
    <property type="entry name" value="GroES-like_sf"/>
</dbReference>
<dbReference type="InterPro" id="IPR004627">
    <property type="entry name" value="L-Threonine_3-DHase"/>
</dbReference>
<dbReference type="InterPro" id="IPR036291">
    <property type="entry name" value="NAD(P)-bd_dom_sf"/>
</dbReference>
<dbReference type="InterPro" id="IPR020843">
    <property type="entry name" value="PKS_ER"/>
</dbReference>
<dbReference type="InterPro" id="IPR050129">
    <property type="entry name" value="Zn_alcohol_dh"/>
</dbReference>
<dbReference type="NCBIfam" id="NF003808">
    <property type="entry name" value="PRK05396.1"/>
    <property type="match status" value="1"/>
</dbReference>
<dbReference type="NCBIfam" id="TIGR00692">
    <property type="entry name" value="tdh"/>
    <property type="match status" value="1"/>
</dbReference>
<dbReference type="PANTHER" id="PTHR43401">
    <property type="entry name" value="L-THREONINE 3-DEHYDROGENASE"/>
    <property type="match status" value="1"/>
</dbReference>
<dbReference type="PANTHER" id="PTHR43401:SF2">
    <property type="entry name" value="L-THREONINE 3-DEHYDROGENASE"/>
    <property type="match status" value="1"/>
</dbReference>
<dbReference type="Pfam" id="PF08240">
    <property type="entry name" value="ADH_N"/>
    <property type="match status" value="1"/>
</dbReference>
<dbReference type="Pfam" id="PF00107">
    <property type="entry name" value="ADH_zinc_N"/>
    <property type="match status" value="1"/>
</dbReference>
<dbReference type="SMART" id="SM00829">
    <property type="entry name" value="PKS_ER"/>
    <property type="match status" value="1"/>
</dbReference>
<dbReference type="SUPFAM" id="SSF50129">
    <property type="entry name" value="GroES-like"/>
    <property type="match status" value="1"/>
</dbReference>
<dbReference type="SUPFAM" id="SSF51735">
    <property type="entry name" value="NAD(P)-binding Rossmann-fold domains"/>
    <property type="match status" value="1"/>
</dbReference>
<dbReference type="PROSITE" id="PS00059">
    <property type="entry name" value="ADH_ZINC"/>
    <property type="match status" value="1"/>
</dbReference>
<proteinExistence type="inferred from homology"/>
<name>TDH_BURP6</name>
<feature type="chain" id="PRO_1000051625" description="L-threonine 3-dehydrogenase">
    <location>
        <begin position="1"/>
        <end position="343"/>
    </location>
</feature>
<feature type="active site" description="Charge relay system" evidence="1">
    <location>
        <position position="40"/>
    </location>
</feature>
<feature type="active site" description="Charge relay system" evidence="1">
    <location>
        <position position="43"/>
    </location>
</feature>
<feature type="binding site" evidence="1">
    <location>
        <position position="38"/>
    </location>
    <ligand>
        <name>Zn(2+)</name>
        <dbReference type="ChEBI" id="CHEBI:29105"/>
        <label>1</label>
        <note>catalytic</note>
    </ligand>
</feature>
<feature type="binding site" evidence="1">
    <location>
        <position position="63"/>
    </location>
    <ligand>
        <name>Zn(2+)</name>
        <dbReference type="ChEBI" id="CHEBI:29105"/>
        <label>1</label>
        <note>catalytic</note>
    </ligand>
</feature>
<feature type="binding site" evidence="1">
    <location>
        <position position="64"/>
    </location>
    <ligand>
        <name>Zn(2+)</name>
        <dbReference type="ChEBI" id="CHEBI:29105"/>
        <label>1</label>
        <note>catalytic</note>
    </ligand>
</feature>
<feature type="binding site" evidence="1">
    <location>
        <position position="93"/>
    </location>
    <ligand>
        <name>Zn(2+)</name>
        <dbReference type="ChEBI" id="CHEBI:29105"/>
        <label>2</label>
    </ligand>
</feature>
<feature type="binding site" evidence="1">
    <location>
        <position position="96"/>
    </location>
    <ligand>
        <name>Zn(2+)</name>
        <dbReference type="ChEBI" id="CHEBI:29105"/>
        <label>2</label>
    </ligand>
</feature>
<feature type="binding site" evidence="1">
    <location>
        <position position="99"/>
    </location>
    <ligand>
        <name>Zn(2+)</name>
        <dbReference type="ChEBI" id="CHEBI:29105"/>
        <label>2</label>
    </ligand>
</feature>
<feature type="binding site" evidence="1">
    <location>
        <position position="107"/>
    </location>
    <ligand>
        <name>Zn(2+)</name>
        <dbReference type="ChEBI" id="CHEBI:29105"/>
        <label>2</label>
    </ligand>
</feature>
<feature type="binding site" evidence="1">
    <location>
        <position position="175"/>
    </location>
    <ligand>
        <name>NAD(+)</name>
        <dbReference type="ChEBI" id="CHEBI:57540"/>
    </ligand>
</feature>
<feature type="binding site" evidence="1">
    <location>
        <position position="195"/>
    </location>
    <ligand>
        <name>NAD(+)</name>
        <dbReference type="ChEBI" id="CHEBI:57540"/>
    </ligand>
</feature>
<feature type="binding site" evidence="1">
    <location>
        <position position="200"/>
    </location>
    <ligand>
        <name>NAD(+)</name>
        <dbReference type="ChEBI" id="CHEBI:57540"/>
    </ligand>
</feature>
<feature type="binding site" evidence="1">
    <location>
        <begin position="262"/>
        <end position="264"/>
    </location>
    <ligand>
        <name>NAD(+)</name>
        <dbReference type="ChEBI" id="CHEBI:57540"/>
    </ligand>
</feature>
<feature type="binding site" evidence="1">
    <location>
        <begin position="286"/>
        <end position="287"/>
    </location>
    <ligand>
        <name>NAD(+)</name>
        <dbReference type="ChEBI" id="CHEBI:57540"/>
    </ligand>
</feature>
<feature type="site" description="Important for catalytic activity for the proton relay mechanism but does not participate directly in the coordination of zinc atom" evidence="1">
    <location>
        <position position="148"/>
    </location>
</feature>
<keyword id="KW-0963">Cytoplasm</keyword>
<keyword id="KW-0479">Metal-binding</keyword>
<keyword id="KW-0520">NAD</keyword>
<keyword id="KW-0560">Oxidoreductase</keyword>
<keyword id="KW-0862">Zinc</keyword>
<accession>A3NF91</accession>
<comment type="function">
    <text evidence="1">Catalyzes the NAD(+)-dependent oxidation of L-threonine to 2-amino-3-ketobutyrate.</text>
</comment>
<comment type="catalytic activity">
    <reaction evidence="1">
        <text>L-threonine + NAD(+) = (2S)-2-amino-3-oxobutanoate + NADH + H(+)</text>
        <dbReference type="Rhea" id="RHEA:13161"/>
        <dbReference type="ChEBI" id="CHEBI:15378"/>
        <dbReference type="ChEBI" id="CHEBI:57540"/>
        <dbReference type="ChEBI" id="CHEBI:57926"/>
        <dbReference type="ChEBI" id="CHEBI:57945"/>
        <dbReference type="ChEBI" id="CHEBI:78948"/>
        <dbReference type="EC" id="1.1.1.103"/>
    </reaction>
</comment>
<comment type="cofactor">
    <cofactor evidence="1">
        <name>Zn(2+)</name>
        <dbReference type="ChEBI" id="CHEBI:29105"/>
    </cofactor>
    <text evidence="1">Binds 2 Zn(2+) ions per subunit.</text>
</comment>
<comment type="pathway">
    <text evidence="1">Amino-acid degradation; L-threonine degradation via oxydo-reductase pathway; glycine from L-threonine: step 1/2.</text>
</comment>
<comment type="subunit">
    <text evidence="1">Homotetramer.</text>
</comment>
<comment type="subcellular location">
    <subcellularLocation>
        <location evidence="1">Cytoplasm</location>
    </subcellularLocation>
</comment>
<comment type="similarity">
    <text evidence="1">Belongs to the zinc-containing alcohol dehydrogenase family.</text>
</comment>
<reference key="1">
    <citation type="journal article" date="2010" name="Genome Biol. Evol.">
        <title>Continuing evolution of Burkholderia mallei through genome reduction and large-scale rearrangements.</title>
        <authorList>
            <person name="Losada L."/>
            <person name="Ronning C.M."/>
            <person name="DeShazer D."/>
            <person name="Woods D."/>
            <person name="Fedorova N."/>
            <person name="Kim H.S."/>
            <person name="Shabalina S.A."/>
            <person name="Pearson T.R."/>
            <person name="Brinkac L."/>
            <person name="Tan P."/>
            <person name="Nandi T."/>
            <person name="Crabtree J."/>
            <person name="Badger J."/>
            <person name="Beckstrom-Sternberg S."/>
            <person name="Saqib M."/>
            <person name="Schutzer S.E."/>
            <person name="Keim P."/>
            <person name="Nierman W.C."/>
        </authorList>
    </citation>
    <scope>NUCLEOTIDE SEQUENCE [LARGE SCALE GENOMIC DNA]</scope>
    <source>
        <strain>668</strain>
    </source>
</reference>
<protein>
    <recommendedName>
        <fullName evidence="1">L-threonine 3-dehydrogenase</fullName>
        <shortName evidence="1">TDH</shortName>
        <ecNumber evidence="1">1.1.1.103</ecNumber>
    </recommendedName>
</protein>
<evidence type="ECO:0000255" key="1">
    <source>
        <dbReference type="HAMAP-Rule" id="MF_00627"/>
    </source>
</evidence>
<gene>
    <name evidence="1" type="primary">tdh</name>
    <name type="ordered locus">BURPS668_A0006</name>
</gene>
<organism>
    <name type="scientific">Burkholderia pseudomallei (strain 668)</name>
    <dbReference type="NCBI Taxonomy" id="320373"/>
    <lineage>
        <taxon>Bacteria</taxon>
        <taxon>Pseudomonadati</taxon>
        <taxon>Pseudomonadota</taxon>
        <taxon>Betaproteobacteria</taxon>
        <taxon>Burkholderiales</taxon>
        <taxon>Burkholderiaceae</taxon>
        <taxon>Burkholderia</taxon>
        <taxon>pseudomallei group</taxon>
    </lineage>
</organism>